<evidence type="ECO:0000250" key="1">
    <source>
        <dbReference type="UniProtKB" id="P33644"/>
    </source>
</evidence>
<evidence type="ECO:0000250" key="2">
    <source>
        <dbReference type="UniProtKB" id="P84138"/>
    </source>
</evidence>
<evidence type="ECO:0000250" key="3">
    <source>
        <dbReference type="UniProtKB" id="Q1EIR0"/>
    </source>
</evidence>
<evidence type="ECO:0000305" key="4"/>
<reference key="1">
    <citation type="journal article" date="2004" name="Proc. Natl. Acad. Sci. U.S.A.">
        <title>Complete genomes of two clinical Staphylococcus aureus strains: evidence for the rapid evolution of virulence and drug resistance.</title>
        <authorList>
            <person name="Holden M.T.G."/>
            <person name="Feil E.J."/>
            <person name="Lindsay J.A."/>
            <person name="Peacock S.J."/>
            <person name="Day N.P.J."/>
            <person name="Enright M.C."/>
            <person name="Foster T.J."/>
            <person name="Moore C.E."/>
            <person name="Hurst L."/>
            <person name="Atkin R."/>
            <person name="Barron A."/>
            <person name="Bason N."/>
            <person name="Bentley S.D."/>
            <person name="Chillingworth C."/>
            <person name="Chillingworth T."/>
            <person name="Churcher C."/>
            <person name="Clark L."/>
            <person name="Corton C."/>
            <person name="Cronin A."/>
            <person name="Doggett J."/>
            <person name="Dowd L."/>
            <person name="Feltwell T."/>
            <person name="Hance Z."/>
            <person name="Harris B."/>
            <person name="Hauser H."/>
            <person name="Holroyd S."/>
            <person name="Jagels K."/>
            <person name="James K.D."/>
            <person name="Lennard N."/>
            <person name="Line A."/>
            <person name="Mayes R."/>
            <person name="Moule S."/>
            <person name="Mungall K."/>
            <person name="Ormond D."/>
            <person name="Quail M.A."/>
            <person name="Rabbinowitsch E."/>
            <person name="Rutherford K.M."/>
            <person name="Sanders M."/>
            <person name="Sharp S."/>
            <person name="Simmonds M."/>
            <person name="Stevens K."/>
            <person name="Whitehead S."/>
            <person name="Barrell B.G."/>
            <person name="Spratt B.G."/>
            <person name="Parkhill J."/>
        </authorList>
    </citation>
    <scope>NUCLEOTIDE SEQUENCE [LARGE SCALE GENOMIC DNA]</scope>
    <source>
        <strain>MSSA476</strain>
    </source>
</reference>
<comment type="function">
    <text evidence="2">Purine nucleoside enzyme that catalyzes the phosphorolysis of adenosine and inosine nucleosides, yielding D-ribose 1-phosphate and the respective free bases, adenine and hypoxanthine. Also catalyzes the phosphorolysis of S-methyl-5'-thioadenosine into adenine and S-methyl-5-thio-alpha-D-ribose 1-phosphate. Also has adenosine deaminase activity.</text>
</comment>
<comment type="catalytic activity">
    <reaction evidence="2">
        <text>adenosine + phosphate = alpha-D-ribose 1-phosphate + adenine</text>
        <dbReference type="Rhea" id="RHEA:27642"/>
        <dbReference type="ChEBI" id="CHEBI:16335"/>
        <dbReference type="ChEBI" id="CHEBI:16708"/>
        <dbReference type="ChEBI" id="CHEBI:43474"/>
        <dbReference type="ChEBI" id="CHEBI:57720"/>
        <dbReference type="EC" id="2.4.2.1"/>
    </reaction>
    <physiologicalReaction direction="left-to-right" evidence="2">
        <dbReference type="Rhea" id="RHEA:27643"/>
    </physiologicalReaction>
</comment>
<comment type="catalytic activity">
    <reaction evidence="2">
        <text>S-methyl-5'-thioadenosine + phosphate = 5-(methylsulfanyl)-alpha-D-ribose 1-phosphate + adenine</text>
        <dbReference type="Rhea" id="RHEA:11852"/>
        <dbReference type="ChEBI" id="CHEBI:16708"/>
        <dbReference type="ChEBI" id="CHEBI:17509"/>
        <dbReference type="ChEBI" id="CHEBI:43474"/>
        <dbReference type="ChEBI" id="CHEBI:58533"/>
        <dbReference type="EC" id="2.4.2.28"/>
    </reaction>
    <physiologicalReaction direction="left-to-right" evidence="2">
        <dbReference type="Rhea" id="RHEA:11853"/>
    </physiologicalReaction>
</comment>
<comment type="catalytic activity">
    <reaction evidence="2">
        <text>inosine + phosphate = alpha-D-ribose 1-phosphate + hypoxanthine</text>
        <dbReference type="Rhea" id="RHEA:27646"/>
        <dbReference type="ChEBI" id="CHEBI:17368"/>
        <dbReference type="ChEBI" id="CHEBI:17596"/>
        <dbReference type="ChEBI" id="CHEBI:43474"/>
        <dbReference type="ChEBI" id="CHEBI:57720"/>
        <dbReference type="EC" id="2.4.2.1"/>
    </reaction>
    <physiologicalReaction direction="left-to-right" evidence="2">
        <dbReference type="Rhea" id="RHEA:27647"/>
    </physiologicalReaction>
</comment>
<comment type="catalytic activity">
    <reaction evidence="2">
        <text>adenosine + H2O + H(+) = inosine + NH4(+)</text>
        <dbReference type="Rhea" id="RHEA:24408"/>
        <dbReference type="ChEBI" id="CHEBI:15377"/>
        <dbReference type="ChEBI" id="CHEBI:15378"/>
        <dbReference type="ChEBI" id="CHEBI:16335"/>
        <dbReference type="ChEBI" id="CHEBI:17596"/>
        <dbReference type="ChEBI" id="CHEBI:28938"/>
        <dbReference type="EC" id="3.5.4.4"/>
    </reaction>
    <physiologicalReaction direction="left-to-right" evidence="2">
        <dbReference type="Rhea" id="RHEA:24409"/>
    </physiologicalReaction>
</comment>
<comment type="cofactor">
    <cofactor evidence="1">
        <name>Cu(2+)</name>
        <dbReference type="ChEBI" id="CHEBI:29036"/>
    </cofactor>
    <cofactor evidence="2">
        <name>Zn(2+)</name>
        <dbReference type="ChEBI" id="CHEBI:29105"/>
    </cofactor>
</comment>
<comment type="subunit">
    <text evidence="3">Homodimer.</text>
</comment>
<comment type="similarity">
    <text evidence="4">Belongs to the purine nucleoside phosphorylase YfiH/LACC1 family.</text>
</comment>
<sequence>MNDNFKKQPHHLIYEELLQQGITLGITTRGDGLSDYPKNAFNMARYIDDRPYNITQHQLQLAEEIAFDRKNWVFPIQTHENKVACITKDDIGTNIDTLTDALHGIDAMYTYDSNVLLTMCYADCVPVYFYSTKHHFIALAHAGWRGTYTEIVKEVLKHVNFDLKDLHVVIGPSTSSSYEINDDIKNKFETLPIDSANYIETRGRDRHGIDLKKANAALLNYYGVPKENIYTTAYATSEHLELFFSYRLEKGQTGRMLAFIGQQ</sequence>
<proteinExistence type="inferred from homology"/>
<accession>Q6GA25</accession>
<gene>
    <name type="ordered locus">SAS1121</name>
</gene>
<dbReference type="EC" id="2.4.2.1" evidence="2"/>
<dbReference type="EC" id="3.5.4.4" evidence="2"/>
<dbReference type="EC" id="2.4.2.28" evidence="2"/>
<dbReference type="EMBL" id="BX571857">
    <property type="protein sequence ID" value="CAG42898.1"/>
    <property type="molecule type" value="Genomic_DNA"/>
</dbReference>
<dbReference type="SMR" id="Q6GA25"/>
<dbReference type="KEGG" id="sas:SAS1121"/>
<dbReference type="HOGENOM" id="CLU_065784_0_0_9"/>
<dbReference type="GO" id="GO:0004000">
    <property type="term" value="F:adenosine deaminase activity"/>
    <property type="evidence" value="ECO:0007669"/>
    <property type="project" value="RHEA"/>
</dbReference>
<dbReference type="GO" id="GO:0005507">
    <property type="term" value="F:copper ion binding"/>
    <property type="evidence" value="ECO:0007669"/>
    <property type="project" value="TreeGrafter"/>
</dbReference>
<dbReference type="GO" id="GO:0016491">
    <property type="term" value="F:oxidoreductase activity"/>
    <property type="evidence" value="ECO:0007669"/>
    <property type="project" value="UniProtKB-KW"/>
</dbReference>
<dbReference type="GO" id="GO:0017061">
    <property type="term" value="F:S-methyl-5-thioadenosine phosphorylase activity"/>
    <property type="evidence" value="ECO:0007669"/>
    <property type="project" value="UniProtKB-EC"/>
</dbReference>
<dbReference type="CDD" id="cd16833">
    <property type="entry name" value="YfiH"/>
    <property type="match status" value="1"/>
</dbReference>
<dbReference type="Gene3D" id="3.60.140.10">
    <property type="entry name" value="CNF1/YfiH-like putative cysteine hydrolases"/>
    <property type="match status" value="1"/>
</dbReference>
<dbReference type="InterPro" id="IPR003730">
    <property type="entry name" value="Cu_polyphenol_OxRdtase"/>
</dbReference>
<dbReference type="InterPro" id="IPR038371">
    <property type="entry name" value="Cu_polyphenol_OxRdtase_sf"/>
</dbReference>
<dbReference type="InterPro" id="IPR011324">
    <property type="entry name" value="Cytotoxic_necrot_fac-like_cat"/>
</dbReference>
<dbReference type="NCBIfam" id="TIGR00726">
    <property type="entry name" value="peptidoglycan editing factor PgeF"/>
    <property type="match status" value="1"/>
</dbReference>
<dbReference type="PANTHER" id="PTHR30616:SF2">
    <property type="entry name" value="PURINE NUCLEOSIDE PHOSPHORYLASE LACC1"/>
    <property type="match status" value="1"/>
</dbReference>
<dbReference type="PANTHER" id="PTHR30616">
    <property type="entry name" value="UNCHARACTERIZED PROTEIN YFIH"/>
    <property type="match status" value="1"/>
</dbReference>
<dbReference type="Pfam" id="PF02578">
    <property type="entry name" value="Cu-oxidase_4"/>
    <property type="match status" value="1"/>
</dbReference>
<dbReference type="SUPFAM" id="SSF64438">
    <property type="entry name" value="CNF1/YfiH-like putative cysteine hydrolases"/>
    <property type="match status" value="1"/>
</dbReference>
<name>PURNU_STAAS</name>
<feature type="chain" id="PRO_0000163175" description="Purine nucleoside phosphorylase SAS1121">
    <location>
        <begin position="1"/>
        <end position="263"/>
    </location>
</feature>
<feature type="binding site" evidence="2">
    <location>
        <position position="79"/>
    </location>
    <ligand>
        <name>Zn(2+)</name>
        <dbReference type="ChEBI" id="CHEBI:29105"/>
        <note>catalytic</note>
    </ligand>
</feature>
<feature type="binding site" evidence="2">
    <location>
        <position position="124"/>
    </location>
    <ligand>
        <name>Zn(2+)</name>
        <dbReference type="ChEBI" id="CHEBI:29105"/>
        <note>catalytic</note>
    </ligand>
</feature>
<feature type="binding site" evidence="2">
    <location>
        <position position="141"/>
    </location>
    <ligand>
        <name>Zn(2+)</name>
        <dbReference type="ChEBI" id="CHEBI:29105"/>
        <note>catalytic</note>
    </ligand>
</feature>
<keyword id="KW-0186">Copper</keyword>
<keyword id="KW-0378">Hydrolase</keyword>
<keyword id="KW-0479">Metal-binding</keyword>
<keyword id="KW-0560">Oxidoreductase</keyword>
<keyword id="KW-0808">Transferase</keyword>
<keyword id="KW-0862">Zinc</keyword>
<protein>
    <recommendedName>
        <fullName>Purine nucleoside phosphorylase SAS1121</fullName>
        <ecNumber evidence="2">2.4.2.1</ecNumber>
    </recommendedName>
    <alternativeName>
        <fullName>Adenosine deaminase SAS1121</fullName>
        <ecNumber evidence="2">3.5.4.4</ecNumber>
    </alternativeName>
    <alternativeName>
        <fullName>S-methyl-5'-thioadenosine phosphorylase SAS1121</fullName>
        <ecNumber evidence="2">2.4.2.28</ecNumber>
    </alternativeName>
</protein>
<organism>
    <name type="scientific">Staphylococcus aureus (strain MSSA476)</name>
    <dbReference type="NCBI Taxonomy" id="282459"/>
    <lineage>
        <taxon>Bacteria</taxon>
        <taxon>Bacillati</taxon>
        <taxon>Bacillota</taxon>
        <taxon>Bacilli</taxon>
        <taxon>Bacillales</taxon>
        <taxon>Staphylococcaceae</taxon>
        <taxon>Staphylococcus</taxon>
    </lineage>
</organism>